<accession>P65377</accession>
<accession>A0A1R3XVN7</accession>
<accession>Q11170</accession>
<accession>X2BF92</accession>
<sequence length="145" mass="15676">MISVSGAVKRMWLLLAIVVVAVVGGLGIYRLHSIFGVHEQPTVMVKPDFDVPLFNPKRVTYEVFGPAKTAKIAYLDPDARVHRLDSVSLPWSVTVETTLPAVSVNLMAQSNADVISCRIIVNGAVKDERSETSPRALTSCQVSSG</sequence>
<comment type="subcellular location">
    <subcellularLocation>
        <location evidence="2">Cell membrane</location>
        <topology evidence="1">Single-pass membrane protein</topology>
    </subcellularLocation>
</comment>
<comment type="similarity">
    <text evidence="2">Belongs to the MmpS family.</text>
</comment>
<comment type="sequence caution" evidence="2">
    <conflict type="erroneous initiation">
        <sequence resource="EMBL-CDS" id="SIT99114"/>
    </conflict>
    <text>Extended N-terminus.</text>
</comment>
<feature type="chain" id="PRO_0000216152" description="Probable transport accessory protein MmpS2">
    <location>
        <begin position="1"/>
        <end position="145"/>
    </location>
</feature>
<feature type="transmembrane region" description="Helical" evidence="1">
    <location>
        <begin position="11"/>
        <end position="31"/>
    </location>
</feature>
<dbReference type="EMBL" id="LT708304">
    <property type="protein sequence ID" value="SIT99114.1"/>
    <property type="status" value="ALT_INIT"/>
    <property type="molecule type" value="Genomic_DNA"/>
</dbReference>
<dbReference type="SMR" id="P65377"/>
<dbReference type="PATRIC" id="fig|233413.5.peg.565"/>
<dbReference type="Proteomes" id="UP000001419">
    <property type="component" value="Chromosome"/>
</dbReference>
<dbReference type="GO" id="GO:0005886">
    <property type="term" value="C:plasma membrane"/>
    <property type="evidence" value="ECO:0007669"/>
    <property type="project" value="UniProtKB-SubCell"/>
</dbReference>
<dbReference type="Gene3D" id="2.60.40.2880">
    <property type="entry name" value="MmpS1-5, C-terminal soluble domain"/>
    <property type="match status" value="1"/>
</dbReference>
<dbReference type="InterPro" id="IPR008693">
    <property type="entry name" value="MmpS"/>
</dbReference>
<dbReference type="InterPro" id="IPR038468">
    <property type="entry name" value="MmpS_C"/>
</dbReference>
<dbReference type="Pfam" id="PF05423">
    <property type="entry name" value="Mycobact_memb"/>
    <property type="match status" value="1"/>
</dbReference>
<keyword id="KW-1003">Cell membrane</keyword>
<keyword id="KW-0472">Membrane</keyword>
<keyword id="KW-1185">Reference proteome</keyword>
<keyword id="KW-0812">Transmembrane</keyword>
<keyword id="KW-1133">Transmembrane helix</keyword>
<proteinExistence type="inferred from homology"/>
<organism>
    <name type="scientific">Mycobacterium bovis (strain ATCC BAA-935 / AF2122/97)</name>
    <dbReference type="NCBI Taxonomy" id="233413"/>
    <lineage>
        <taxon>Bacteria</taxon>
        <taxon>Bacillati</taxon>
        <taxon>Actinomycetota</taxon>
        <taxon>Actinomycetes</taxon>
        <taxon>Mycobacteriales</taxon>
        <taxon>Mycobacteriaceae</taxon>
        <taxon>Mycobacterium</taxon>
        <taxon>Mycobacterium tuberculosis complex</taxon>
    </lineage>
</organism>
<evidence type="ECO:0000255" key="1"/>
<evidence type="ECO:0000305" key="2"/>
<name>MMPS2_MYCBO</name>
<reference key="1">
    <citation type="journal article" date="2003" name="Proc. Natl. Acad. Sci. U.S.A.">
        <title>The complete genome sequence of Mycobacterium bovis.</title>
        <authorList>
            <person name="Garnier T."/>
            <person name="Eiglmeier K."/>
            <person name="Camus J.-C."/>
            <person name="Medina N."/>
            <person name="Mansoor H."/>
            <person name="Pryor M."/>
            <person name="Duthoy S."/>
            <person name="Grondin S."/>
            <person name="Lacroix C."/>
            <person name="Monsempe C."/>
            <person name="Simon S."/>
            <person name="Harris B."/>
            <person name="Atkin R."/>
            <person name="Doggett J."/>
            <person name="Mayes R."/>
            <person name="Keating L."/>
            <person name="Wheeler P.R."/>
            <person name="Parkhill J."/>
            <person name="Barrell B.G."/>
            <person name="Cole S.T."/>
            <person name="Gordon S.V."/>
            <person name="Hewinson R.G."/>
        </authorList>
    </citation>
    <scope>NUCLEOTIDE SEQUENCE [LARGE SCALE GENOMIC DNA]</scope>
    <source>
        <strain>ATCC BAA-935 / AF2122/97</strain>
    </source>
</reference>
<reference key="2">
    <citation type="journal article" date="2017" name="Genome Announc.">
        <title>Updated reference genome sequence and annotation of Mycobacterium bovis AF2122/97.</title>
        <authorList>
            <person name="Malone K.M."/>
            <person name="Farrell D."/>
            <person name="Stuber T.P."/>
            <person name="Schubert O.T."/>
            <person name="Aebersold R."/>
            <person name="Robbe-Austerman S."/>
            <person name="Gordon S.V."/>
        </authorList>
    </citation>
    <scope>NUCLEOTIDE SEQUENCE [LARGE SCALE GENOMIC DNA]</scope>
    <scope>GENOME REANNOTATION</scope>
    <source>
        <strain>ATCC BAA-935 / AF2122/97</strain>
    </source>
</reference>
<protein>
    <recommendedName>
        <fullName evidence="2">Probable transport accessory protein MmpS2</fullName>
    </recommendedName>
</protein>
<gene>
    <name type="primary">mmpS2</name>
    <name type="ordered locus">BQ2027_MB0518</name>
</gene>